<protein>
    <recommendedName>
        <fullName evidence="2">Translation initiation factor IF-2</fullName>
    </recommendedName>
</protein>
<reference key="1">
    <citation type="submission" date="2005-10" db="EMBL/GenBank/DDBJ databases">
        <title>Complete sequence of chromosome 1 of Burkholderia sp. 383.</title>
        <authorList>
            <consortium name="US DOE Joint Genome Institute"/>
            <person name="Copeland A."/>
            <person name="Lucas S."/>
            <person name="Lapidus A."/>
            <person name="Barry K."/>
            <person name="Detter J.C."/>
            <person name="Glavina T."/>
            <person name="Hammon N."/>
            <person name="Israni S."/>
            <person name="Pitluck S."/>
            <person name="Chain P."/>
            <person name="Malfatti S."/>
            <person name="Shin M."/>
            <person name="Vergez L."/>
            <person name="Schmutz J."/>
            <person name="Larimer F."/>
            <person name="Land M."/>
            <person name="Kyrpides N."/>
            <person name="Lykidis A."/>
            <person name="Richardson P."/>
        </authorList>
    </citation>
    <scope>NUCLEOTIDE SEQUENCE [LARGE SCALE GENOMIC DNA]</scope>
    <source>
        <strain>ATCC 17760 / DSM 23089 / LMG 22485 / NCIMB 9086 / R18194 / 383</strain>
    </source>
</reference>
<feature type="chain" id="PRO_0000228180" description="Translation initiation factor IF-2">
    <location>
        <begin position="1"/>
        <end position="972"/>
    </location>
</feature>
<feature type="domain" description="tr-type G">
    <location>
        <begin position="472"/>
        <end position="641"/>
    </location>
</feature>
<feature type="region of interest" description="Disordered" evidence="3">
    <location>
        <begin position="48"/>
        <end position="85"/>
    </location>
</feature>
<feature type="region of interest" description="Disordered" evidence="3">
    <location>
        <begin position="99"/>
        <end position="385"/>
    </location>
</feature>
<feature type="region of interest" description="G1" evidence="1">
    <location>
        <begin position="481"/>
        <end position="488"/>
    </location>
</feature>
<feature type="region of interest" description="G2" evidence="1">
    <location>
        <begin position="506"/>
        <end position="510"/>
    </location>
</feature>
<feature type="region of interest" description="G3" evidence="1">
    <location>
        <begin position="527"/>
        <end position="530"/>
    </location>
</feature>
<feature type="region of interest" description="G4" evidence="1">
    <location>
        <begin position="581"/>
        <end position="584"/>
    </location>
</feature>
<feature type="region of interest" description="G5" evidence="1">
    <location>
        <begin position="617"/>
        <end position="619"/>
    </location>
</feature>
<feature type="compositionally biased region" description="Basic and acidic residues" evidence="3">
    <location>
        <begin position="48"/>
        <end position="63"/>
    </location>
</feature>
<feature type="compositionally biased region" description="Low complexity" evidence="3">
    <location>
        <begin position="105"/>
        <end position="114"/>
    </location>
</feature>
<feature type="compositionally biased region" description="Basic and acidic residues" evidence="3">
    <location>
        <begin position="121"/>
        <end position="181"/>
    </location>
</feature>
<feature type="compositionally biased region" description="Low complexity" evidence="3">
    <location>
        <begin position="182"/>
        <end position="205"/>
    </location>
</feature>
<feature type="compositionally biased region" description="Basic and acidic residues" evidence="3">
    <location>
        <begin position="212"/>
        <end position="263"/>
    </location>
</feature>
<feature type="compositionally biased region" description="Pro residues" evidence="3">
    <location>
        <begin position="279"/>
        <end position="288"/>
    </location>
</feature>
<feature type="compositionally biased region" description="Low complexity" evidence="3">
    <location>
        <begin position="313"/>
        <end position="328"/>
    </location>
</feature>
<feature type="compositionally biased region" description="Gly residues" evidence="3">
    <location>
        <begin position="357"/>
        <end position="370"/>
    </location>
</feature>
<feature type="binding site" evidence="2">
    <location>
        <begin position="481"/>
        <end position="488"/>
    </location>
    <ligand>
        <name>GTP</name>
        <dbReference type="ChEBI" id="CHEBI:37565"/>
    </ligand>
</feature>
<feature type="binding site" evidence="2">
    <location>
        <begin position="527"/>
        <end position="531"/>
    </location>
    <ligand>
        <name>GTP</name>
        <dbReference type="ChEBI" id="CHEBI:37565"/>
    </ligand>
</feature>
<feature type="binding site" evidence="2">
    <location>
        <begin position="581"/>
        <end position="584"/>
    </location>
    <ligand>
        <name>GTP</name>
        <dbReference type="ChEBI" id="CHEBI:37565"/>
    </ligand>
</feature>
<comment type="function">
    <text evidence="2">One of the essential components for the initiation of protein synthesis. Protects formylmethionyl-tRNA from spontaneous hydrolysis and promotes its binding to the 30S ribosomal subunits. Also involved in the hydrolysis of GTP during the formation of the 70S ribosomal complex.</text>
</comment>
<comment type="subcellular location">
    <subcellularLocation>
        <location evidence="2">Cytoplasm</location>
    </subcellularLocation>
</comment>
<comment type="similarity">
    <text evidence="2">Belongs to the TRAFAC class translation factor GTPase superfamily. Classic translation factor GTPase family. IF-2 subfamily.</text>
</comment>
<accession>Q39H30</accession>
<proteinExistence type="inferred from homology"/>
<organism>
    <name type="scientific">Burkholderia lata (strain ATCC 17760 / DSM 23089 / LMG 22485 / NCIMB 9086 / R18194 / 383)</name>
    <dbReference type="NCBI Taxonomy" id="482957"/>
    <lineage>
        <taxon>Bacteria</taxon>
        <taxon>Pseudomonadati</taxon>
        <taxon>Pseudomonadota</taxon>
        <taxon>Betaproteobacteria</taxon>
        <taxon>Burkholderiales</taxon>
        <taxon>Burkholderiaceae</taxon>
        <taxon>Burkholderia</taxon>
        <taxon>Burkholderia cepacia complex</taxon>
    </lineage>
</organism>
<gene>
    <name evidence="2" type="primary">infB</name>
    <name type="ordered locus">Bcep18194_A4641</name>
</gene>
<dbReference type="EMBL" id="CP000151">
    <property type="protein sequence ID" value="ABB08236.1"/>
    <property type="molecule type" value="Genomic_DNA"/>
</dbReference>
<dbReference type="RefSeq" id="WP_011351798.1">
    <property type="nucleotide sequence ID" value="NC_007510.1"/>
</dbReference>
<dbReference type="SMR" id="Q39H30"/>
<dbReference type="GeneID" id="45094536"/>
<dbReference type="KEGG" id="bur:Bcep18194_A4641"/>
<dbReference type="PATRIC" id="fig|482957.22.peg.1551"/>
<dbReference type="HOGENOM" id="CLU_006301_6_0_4"/>
<dbReference type="Proteomes" id="UP000002705">
    <property type="component" value="Chromosome 1"/>
</dbReference>
<dbReference type="GO" id="GO:0005829">
    <property type="term" value="C:cytosol"/>
    <property type="evidence" value="ECO:0007669"/>
    <property type="project" value="TreeGrafter"/>
</dbReference>
<dbReference type="GO" id="GO:0005525">
    <property type="term" value="F:GTP binding"/>
    <property type="evidence" value="ECO:0007669"/>
    <property type="project" value="UniProtKB-KW"/>
</dbReference>
<dbReference type="GO" id="GO:0003924">
    <property type="term" value="F:GTPase activity"/>
    <property type="evidence" value="ECO:0007669"/>
    <property type="project" value="UniProtKB-UniRule"/>
</dbReference>
<dbReference type="GO" id="GO:0003743">
    <property type="term" value="F:translation initiation factor activity"/>
    <property type="evidence" value="ECO:0007669"/>
    <property type="project" value="UniProtKB-UniRule"/>
</dbReference>
<dbReference type="CDD" id="cd01887">
    <property type="entry name" value="IF2_eIF5B"/>
    <property type="match status" value="1"/>
</dbReference>
<dbReference type="CDD" id="cd03702">
    <property type="entry name" value="IF2_mtIF2_II"/>
    <property type="match status" value="1"/>
</dbReference>
<dbReference type="CDD" id="cd03692">
    <property type="entry name" value="mtIF2_IVc"/>
    <property type="match status" value="1"/>
</dbReference>
<dbReference type="FunFam" id="2.40.30.10:FF:000007">
    <property type="entry name" value="Translation initiation factor IF-2"/>
    <property type="match status" value="1"/>
</dbReference>
<dbReference type="FunFam" id="2.40.30.10:FF:000008">
    <property type="entry name" value="Translation initiation factor IF-2"/>
    <property type="match status" value="1"/>
</dbReference>
<dbReference type="FunFam" id="3.40.50.10050:FF:000001">
    <property type="entry name" value="Translation initiation factor IF-2"/>
    <property type="match status" value="1"/>
</dbReference>
<dbReference type="FunFam" id="3.40.50.300:FF:000019">
    <property type="entry name" value="Translation initiation factor IF-2"/>
    <property type="match status" value="1"/>
</dbReference>
<dbReference type="Gene3D" id="3.40.50.300">
    <property type="entry name" value="P-loop containing nucleotide triphosphate hydrolases"/>
    <property type="match status" value="1"/>
</dbReference>
<dbReference type="Gene3D" id="3.30.56.50">
    <property type="entry name" value="Putative DNA-binding domain, N-terminal subdomain of bacterial translation initiation factor IF2"/>
    <property type="match status" value="1"/>
</dbReference>
<dbReference type="Gene3D" id="2.40.30.10">
    <property type="entry name" value="Translation factors"/>
    <property type="match status" value="2"/>
</dbReference>
<dbReference type="Gene3D" id="3.40.50.10050">
    <property type="entry name" value="Translation initiation factor IF- 2, domain 3"/>
    <property type="match status" value="1"/>
</dbReference>
<dbReference type="HAMAP" id="MF_00100_B">
    <property type="entry name" value="IF_2_B"/>
    <property type="match status" value="1"/>
</dbReference>
<dbReference type="InterPro" id="IPR009061">
    <property type="entry name" value="DNA-bd_dom_put_sf"/>
</dbReference>
<dbReference type="InterPro" id="IPR053905">
    <property type="entry name" value="EF-G-like_DII"/>
</dbReference>
<dbReference type="InterPro" id="IPR013575">
    <property type="entry name" value="IF2_assoc_dom_bac"/>
</dbReference>
<dbReference type="InterPro" id="IPR044145">
    <property type="entry name" value="IF2_II"/>
</dbReference>
<dbReference type="InterPro" id="IPR006847">
    <property type="entry name" value="IF2_N"/>
</dbReference>
<dbReference type="InterPro" id="IPR027417">
    <property type="entry name" value="P-loop_NTPase"/>
</dbReference>
<dbReference type="InterPro" id="IPR005225">
    <property type="entry name" value="Small_GTP-bd"/>
</dbReference>
<dbReference type="InterPro" id="IPR000795">
    <property type="entry name" value="T_Tr_GTP-bd_dom"/>
</dbReference>
<dbReference type="InterPro" id="IPR000178">
    <property type="entry name" value="TF_IF2_bacterial-like"/>
</dbReference>
<dbReference type="InterPro" id="IPR015760">
    <property type="entry name" value="TIF_IF2"/>
</dbReference>
<dbReference type="InterPro" id="IPR023115">
    <property type="entry name" value="TIF_IF2_dom3"/>
</dbReference>
<dbReference type="InterPro" id="IPR036925">
    <property type="entry name" value="TIF_IF2_dom3_sf"/>
</dbReference>
<dbReference type="InterPro" id="IPR009000">
    <property type="entry name" value="Transl_B-barrel_sf"/>
</dbReference>
<dbReference type="NCBIfam" id="TIGR00487">
    <property type="entry name" value="IF-2"/>
    <property type="match status" value="1"/>
</dbReference>
<dbReference type="NCBIfam" id="TIGR00231">
    <property type="entry name" value="small_GTP"/>
    <property type="match status" value="1"/>
</dbReference>
<dbReference type="PANTHER" id="PTHR43381:SF5">
    <property type="entry name" value="TR-TYPE G DOMAIN-CONTAINING PROTEIN"/>
    <property type="match status" value="1"/>
</dbReference>
<dbReference type="PANTHER" id="PTHR43381">
    <property type="entry name" value="TRANSLATION INITIATION FACTOR IF-2-RELATED"/>
    <property type="match status" value="1"/>
</dbReference>
<dbReference type="Pfam" id="PF22042">
    <property type="entry name" value="EF-G_D2"/>
    <property type="match status" value="1"/>
</dbReference>
<dbReference type="Pfam" id="PF00009">
    <property type="entry name" value="GTP_EFTU"/>
    <property type="match status" value="1"/>
</dbReference>
<dbReference type="Pfam" id="PF11987">
    <property type="entry name" value="IF-2"/>
    <property type="match status" value="1"/>
</dbReference>
<dbReference type="Pfam" id="PF08364">
    <property type="entry name" value="IF2_assoc"/>
    <property type="match status" value="1"/>
</dbReference>
<dbReference type="Pfam" id="PF04760">
    <property type="entry name" value="IF2_N"/>
    <property type="match status" value="2"/>
</dbReference>
<dbReference type="SUPFAM" id="SSF52156">
    <property type="entry name" value="Initiation factor IF2/eIF5b, domain 3"/>
    <property type="match status" value="1"/>
</dbReference>
<dbReference type="SUPFAM" id="SSF52540">
    <property type="entry name" value="P-loop containing nucleoside triphosphate hydrolases"/>
    <property type="match status" value="1"/>
</dbReference>
<dbReference type="SUPFAM" id="SSF46955">
    <property type="entry name" value="Putative DNA-binding domain"/>
    <property type="match status" value="1"/>
</dbReference>
<dbReference type="SUPFAM" id="SSF50447">
    <property type="entry name" value="Translation proteins"/>
    <property type="match status" value="2"/>
</dbReference>
<dbReference type="PROSITE" id="PS51722">
    <property type="entry name" value="G_TR_2"/>
    <property type="match status" value="1"/>
</dbReference>
<dbReference type="PROSITE" id="PS01176">
    <property type="entry name" value="IF2"/>
    <property type="match status" value="1"/>
</dbReference>
<keyword id="KW-0963">Cytoplasm</keyword>
<keyword id="KW-0342">GTP-binding</keyword>
<keyword id="KW-0396">Initiation factor</keyword>
<keyword id="KW-0547">Nucleotide-binding</keyword>
<keyword id="KW-0648">Protein biosynthesis</keyword>
<sequence>MASNNVAQFAAELKMPAGVLLEQLQAAGVQKASEDDALSETDKARLLDHLRKSHGATDGDKRKITLTRKHTSEIKQSDATGKARTIQVEVRKKRTFVKRDDVSEGAEQGQAQVAEADDDAELKRREEEARREADLLEKQAQELRERQERLEREEAERRAREEAAEAERRRAEEEAAAKRVAAEAAAAQQQAAAQQAAAAEQQEAASTQSAQDEARAAAERAAQREAAKKAEDAAREAADKARAEQEEISKRRAAAEAEARAIREMMNTPRKAVVKAVEPPKPVEPPKPAEAKGTLHKPAKPEGAQARPAVKKPAGAAAPATTAPAGAGDRNKKPGAGKGGWQDDASKRRGIKTRGDSSGGVDRGWRGGPKGRGRHQDSSTFQAPTEPIVREVHVPETVSVADLAHKMSVKASEVIKVMMKMGQMVTINQVLDQETAMIIVEELGHRAVAAKLDDPEALLVEGETGTDAEQLPRPPVVTVMGHVDHGKTSLLDHIRRAKVAAGEAGGITQHIGAYHVDTPRGVITFLDTPGHEAFTAMRARGAKATDIVVLVVAADDGVMPQTKEAIAHAKAGGVPIVVAINKIDKPDANLDRVKQELVAEGVVPEEYGGDSPFVPVSAKTGAGIDDLLENVLLQAEVLELKAPVEAPAKGIVIEAKLDKGKGPVATILVQAGTLNRGDIVLAGTAYGRVRAMLDENGKPTKEAGPSIPVEIQGLSEVPGAGEEVIVLPDERKAREIALFRQGKFRDVKLAKQQAAKLESMLEQMGEGEVQNLPLIIKADVQGSQEALVQSLLKLSTDEVRVQIVHSAVGGISENDVNLATASKAVIIGFNTRADAQARKLAESNGIDIRYYNIIYDAVDEVKAAMSGMLAPEKREVITGMVEVRQVFKVPKIGAVAGCMVTDGIVKRSSSVRVLRNNVVIFTGELESLKRFKDDVKEVKQGFECGMSVKNFNDIVEGDQFEVFEVTEVARTL</sequence>
<name>IF2_BURL3</name>
<evidence type="ECO:0000250" key="1"/>
<evidence type="ECO:0000255" key="2">
    <source>
        <dbReference type="HAMAP-Rule" id="MF_00100"/>
    </source>
</evidence>
<evidence type="ECO:0000256" key="3">
    <source>
        <dbReference type="SAM" id="MobiDB-lite"/>
    </source>
</evidence>